<protein>
    <recommendedName>
        <fullName evidence="1">8-amino-7-oxononanoate synthase</fullName>
        <shortName evidence="1">AONS</shortName>
        <ecNumber evidence="1">2.3.1.47</ecNumber>
    </recommendedName>
    <alternativeName>
        <fullName evidence="1">7-keto-8-amino-pelargonic acid synthase</fullName>
        <shortName evidence="1">7-KAP synthase</shortName>
        <shortName evidence="1">KAPA synthase</shortName>
    </alternativeName>
    <alternativeName>
        <fullName evidence="1">8-amino-7-ketopelargonate synthase</fullName>
    </alternativeName>
</protein>
<evidence type="ECO:0000255" key="1">
    <source>
        <dbReference type="HAMAP-Rule" id="MF_01693"/>
    </source>
</evidence>
<organism>
    <name type="scientific">Aromatoleum aromaticum (strain DSM 19018 / LMG 30748 / EbN1)</name>
    <name type="common">Azoarcus sp. (strain EbN1)</name>
    <dbReference type="NCBI Taxonomy" id="76114"/>
    <lineage>
        <taxon>Bacteria</taxon>
        <taxon>Pseudomonadati</taxon>
        <taxon>Pseudomonadota</taxon>
        <taxon>Betaproteobacteria</taxon>
        <taxon>Rhodocyclales</taxon>
        <taxon>Rhodocyclaceae</taxon>
        <taxon>Aromatoleum</taxon>
    </lineage>
</organism>
<name>BIOF_AROAE</name>
<sequence>MLLDRLKADLAELDTRALRRTRRSLATPCAPHARVDGRDMLAFCSNDYLGLAANPALTRALQTGAVHWGAGCGASHLVSGHYAVHDELEARLAAFVDCERALYFSTGYMANTGTIPALVGRGDAIFADRLNHASLVDGALLSRAELHRYAHGDPAALERALAASSARRKLIVTDAVFSMDGDVAPLATLLELAERFDAWLMVDDAHGFGVLGPGGRGAVAEAGLASWRLIYVGTLGKAAGVSGAFVAGHADVVEWLMQKARTYIFTTGAPPALAETLLASLELIERGDERREHLVGLVALLRRELTLARWQLLPSRTPIQPVLIGDNAEALAVARALWDEGLWVPAIRPPTVPHGTARLRISLTAAHCADDVRRLAQALNRLEAQR</sequence>
<accession>Q5NZF5</accession>
<feature type="chain" id="PRO_0000380902" description="8-amino-7-oxononanoate synthase">
    <location>
        <begin position="1"/>
        <end position="386"/>
    </location>
</feature>
<feature type="binding site" evidence="1">
    <location>
        <position position="20"/>
    </location>
    <ligand>
        <name>substrate</name>
    </ligand>
</feature>
<feature type="binding site" evidence="1">
    <location>
        <begin position="107"/>
        <end position="108"/>
    </location>
    <ligand>
        <name>pyridoxal 5'-phosphate</name>
        <dbReference type="ChEBI" id="CHEBI:597326"/>
    </ligand>
</feature>
<feature type="binding site" evidence="1">
    <location>
        <position position="132"/>
    </location>
    <ligand>
        <name>substrate</name>
    </ligand>
</feature>
<feature type="binding site" evidence="1">
    <location>
        <position position="178"/>
    </location>
    <ligand>
        <name>pyridoxal 5'-phosphate</name>
        <dbReference type="ChEBI" id="CHEBI:597326"/>
    </ligand>
</feature>
<feature type="binding site" evidence="1">
    <location>
        <position position="206"/>
    </location>
    <ligand>
        <name>pyridoxal 5'-phosphate</name>
        <dbReference type="ChEBI" id="CHEBI:597326"/>
    </ligand>
</feature>
<feature type="binding site" evidence="1">
    <location>
        <position position="234"/>
    </location>
    <ligand>
        <name>pyridoxal 5'-phosphate</name>
        <dbReference type="ChEBI" id="CHEBI:597326"/>
    </ligand>
</feature>
<feature type="binding site" evidence="1">
    <location>
        <position position="351"/>
    </location>
    <ligand>
        <name>substrate</name>
    </ligand>
</feature>
<feature type="modified residue" description="N6-(pyridoxal phosphate)lysine" evidence="1">
    <location>
        <position position="237"/>
    </location>
</feature>
<reference key="1">
    <citation type="journal article" date="2005" name="Arch. Microbiol.">
        <title>The genome sequence of an anaerobic aromatic-degrading denitrifying bacterium, strain EbN1.</title>
        <authorList>
            <person name="Rabus R."/>
            <person name="Kube M."/>
            <person name="Heider J."/>
            <person name="Beck A."/>
            <person name="Heitmann K."/>
            <person name="Widdel F."/>
            <person name="Reinhardt R."/>
        </authorList>
    </citation>
    <scope>NUCLEOTIDE SEQUENCE [LARGE SCALE GENOMIC DNA]</scope>
    <source>
        <strain>DSM 19018 / LMG 30748 / EbN1</strain>
    </source>
</reference>
<gene>
    <name evidence="1" type="primary">bioF</name>
    <name type="ordered locus">AZOSEA34340</name>
    <name type="ORF">ebA6018</name>
</gene>
<dbReference type="EC" id="2.3.1.47" evidence="1"/>
<dbReference type="EMBL" id="CR555306">
    <property type="protein sequence ID" value="CAI09559.1"/>
    <property type="molecule type" value="Genomic_DNA"/>
</dbReference>
<dbReference type="RefSeq" id="WP_011239219.1">
    <property type="nucleotide sequence ID" value="NC_006513.1"/>
</dbReference>
<dbReference type="SMR" id="Q5NZF5"/>
<dbReference type="STRING" id="76114.ebA6018"/>
<dbReference type="KEGG" id="eba:ebA6018"/>
<dbReference type="eggNOG" id="COG0156">
    <property type="taxonomic scope" value="Bacteria"/>
</dbReference>
<dbReference type="HOGENOM" id="CLU_015846_11_2_4"/>
<dbReference type="OrthoDB" id="9807157at2"/>
<dbReference type="UniPathway" id="UPA00078"/>
<dbReference type="Proteomes" id="UP000006552">
    <property type="component" value="Chromosome"/>
</dbReference>
<dbReference type="GO" id="GO:0008710">
    <property type="term" value="F:8-amino-7-oxononanoate synthase activity"/>
    <property type="evidence" value="ECO:0007669"/>
    <property type="project" value="UniProtKB-UniRule"/>
</dbReference>
<dbReference type="GO" id="GO:0030170">
    <property type="term" value="F:pyridoxal phosphate binding"/>
    <property type="evidence" value="ECO:0007669"/>
    <property type="project" value="UniProtKB-UniRule"/>
</dbReference>
<dbReference type="GO" id="GO:0009102">
    <property type="term" value="P:biotin biosynthetic process"/>
    <property type="evidence" value="ECO:0007669"/>
    <property type="project" value="UniProtKB-UniRule"/>
</dbReference>
<dbReference type="CDD" id="cd06454">
    <property type="entry name" value="KBL_like"/>
    <property type="match status" value="1"/>
</dbReference>
<dbReference type="Gene3D" id="3.90.1150.10">
    <property type="entry name" value="Aspartate Aminotransferase, domain 1"/>
    <property type="match status" value="1"/>
</dbReference>
<dbReference type="Gene3D" id="3.40.640.10">
    <property type="entry name" value="Type I PLP-dependent aspartate aminotransferase-like (Major domain)"/>
    <property type="match status" value="1"/>
</dbReference>
<dbReference type="HAMAP" id="MF_01693">
    <property type="entry name" value="BioF_aminotrans_2"/>
    <property type="match status" value="1"/>
</dbReference>
<dbReference type="InterPro" id="IPR004839">
    <property type="entry name" value="Aminotransferase_I/II_large"/>
</dbReference>
<dbReference type="InterPro" id="IPR050087">
    <property type="entry name" value="AON_synthase_class-II"/>
</dbReference>
<dbReference type="InterPro" id="IPR004723">
    <property type="entry name" value="AONS_Archaea/Proteobacteria"/>
</dbReference>
<dbReference type="InterPro" id="IPR022834">
    <property type="entry name" value="AONS_Proteobacteria"/>
</dbReference>
<dbReference type="InterPro" id="IPR015424">
    <property type="entry name" value="PyrdxlP-dep_Trfase"/>
</dbReference>
<dbReference type="InterPro" id="IPR015421">
    <property type="entry name" value="PyrdxlP-dep_Trfase_major"/>
</dbReference>
<dbReference type="InterPro" id="IPR015422">
    <property type="entry name" value="PyrdxlP-dep_Trfase_small"/>
</dbReference>
<dbReference type="NCBIfam" id="TIGR00858">
    <property type="entry name" value="bioF"/>
    <property type="match status" value="1"/>
</dbReference>
<dbReference type="PANTHER" id="PTHR13693:SF100">
    <property type="entry name" value="8-AMINO-7-OXONONANOATE SYNTHASE"/>
    <property type="match status" value="1"/>
</dbReference>
<dbReference type="PANTHER" id="PTHR13693">
    <property type="entry name" value="CLASS II AMINOTRANSFERASE/8-AMINO-7-OXONONANOATE SYNTHASE"/>
    <property type="match status" value="1"/>
</dbReference>
<dbReference type="Pfam" id="PF00155">
    <property type="entry name" value="Aminotran_1_2"/>
    <property type="match status" value="1"/>
</dbReference>
<dbReference type="SUPFAM" id="SSF53383">
    <property type="entry name" value="PLP-dependent transferases"/>
    <property type="match status" value="1"/>
</dbReference>
<proteinExistence type="inferred from homology"/>
<keyword id="KW-0093">Biotin biosynthesis</keyword>
<keyword id="KW-0663">Pyridoxal phosphate</keyword>
<keyword id="KW-1185">Reference proteome</keyword>
<keyword id="KW-0808">Transferase</keyword>
<comment type="function">
    <text evidence="1">Catalyzes the decarboxylative condensation of pimeloyl-[acyl-carrier protein] and L-alanine to produce 8-amino-7-oxononanoate (AON), [acyl-carrier protein], and carbon dioxide.</text>
</comment>
<comment type="catalytic activity">
    <reaction evidence="1">
        <text>6-carboxyhexanoyl-[ACP] + L-alanine + H(+) = (8S)-8-amino-7-oxononanoate + holo-[ACP] + CO2</text>
        <dbReference type="Rhea" id="RHEA:42288"/>
        <dbReference type="Rhea" id="RHEA-COMP:9685"/>
        <dbReference type="Rhea" id="RHEA-COMP:9955"/>
        <dbReference type="ChEBI" id="CHEBI:15378"/>
        <dbReference type="ChEBI" id="CHEBI:16526"/>
        <dbReference type="ChEBI" id="CHEBI:57972"/>
        <dbReference type="ChEBI" id="CHEBI:64479"/>
        <dbReference type="ChEBI" id="CHEBI:78846"/>
        <dbReference type="ChEBI" id="CHEBI:149468"/>
        <dbReference type="EC" id="2.3.1.47"/>
    </reaction>
</comment>
<comment type="cofactor">
    <cofactor evidence="1">
        <name>pyridoxal 5'-phosphate</name>
        <dbReference type="ChEBI" id="CHEBI:597326"/>
    </cofactor>
</comment>
<comment type="pathway">
    <text evidence="1">Cofactor biosynthesis; biotin biosynthesis.</text>
</comment>
<comment type="subunit">
    <text evidence="1">Homodimer.</text>
</comment>
<comment type="similarity">
    <text evidence="1">Belongs to the class-II pyridoxal-phosphate-dependent aminotransferase family. BioF subfamily.</text>
</comment>